<gene>
    <name evidence="1" type="primary">gshA</name>
    <name type="ordered locus">BWG_2429</name>
</gene>
<dbReference type="EC" id="6.3.2.2" evidence="1"/>
<dbReference type="EMBL" id="CP001396">
    <property type="protein sequence ID" value="ACR63278.1"/>
    <property type="molecule type" value="Genomic_DNA"/>
</dbReference>
<dbReference type="RefSeq" id="WP_000611804.1">
    <property type="nucleotide sequence ID" value="NC_012759.1"/>
</dbReference>
<dbReference type="SMR" id="C4ZYT8"/>
<dbReference type="KEGG" id="ebw:BWG_2429"/>
<dbReference type="HOGENOM" id="CLU_020728_3_0_6"/>
<dbReference type="UniPathway" id="UPA00142">
    <property type="reaction ID" value="UER00209"/>
</dbReference>
<dbReference type="GO" id="GO:0005829">
    <property type="term" value="C:cytosol"/>
    <property type="evidence" value="ECO:0007669"/>
    <property type="project" value="TreeGrafter"/>
</dbReference>
<dbReference type="GO" id="GO:0005524">
    <property type="term" value="F:ATP binding"/>
    <property type="evidence" value="ECO:0007669"/>
    <property type="project" value="UniProtKB-KW"/>
</dbReference>
<dbReference type="GO" id="GO:0004357">
    <property type="term" value="F:glutamate-cysteine ligase activity"/>
    <property type="evidence" value="ECO:0007669"/>
    <property type="project" value="UniProtKB-UniRule"/>
</dbReference>
<dbReference type="GO" id="GO:0046872">
    <property type="term" value="F:metal ion binding"/>
    <property type="evidence" value="ECO:0007669"/>
    <property type="project" value="TreeGrafter"/>
</dbReference>
<dbReference type="GO" id="GO:0006750">
    <property type="term" value="P:glutathione biosynthetic process"/>
    <property type="evidence" value="ECO:0007669"/>
    <property type="project" value="UniProtKB-UniRule"/>
</dbReference>
<dbReference type="FunFam" id="3.30.590.20:FF:000001">
    <property type="entry name" value="Glutamate--cysteine ligase"/>
    <property type="match status" value="1"/>
</dbReference>
<dbReference type="Gene3D" id="3.30.590.20">
    <property type="match status" value="1"/>
</dbReference>
<dbReference type="HAMAP" id="MF_00578">
    <property type="entry name" value="Glu_cys_ligase"/>
    <property type="match status" value="1"/>
</dbReference>
<dbReference type="InterPro" id="IPR014746">
    <property type="entry name" value="Gln_synth/guanido_kin_cat_dom"/>
</dbReference>
<dbReference type="InterPro" id="IPR007370">
    <property type="entry name" value="Glu_cys_ligase"/>
</dbReference>
<dbReference type="InterPro" id="IPR006334">
    <property type="entry name" value="Glut_cys_ligase"/>
</dbReference>
<dbReference type="NCBIfam" id="TIGR01434">
    <property type="entry name" value="glu_cys_ligase"/>
    <property type="match status" value="1"/>
</dbReference>
<dbReference type="PANTHER" id="PTHR38761">
    <property type="entry name" value="GLUTAMATE--CYSTEINE LIGASE"/>
    <property type="match status" value="1"/>
</dbReference>
<dbReference type="PANTHER" id="PTHR38761:SF1">
    <property type="entry name" value="GLUTAMATE--CYSTEINE LIGASE"/>
    <property type="match status" value="1"/>
</dbReference>
<dbReference type="Pfam" id="PF04262">
    <property type="entry name" value="Glu_cys_ligase"/>
    <property type="match status" value="1"/>
</dbReference>
<dbReference type="SUPFAM" id="SSF55931">
    <property type="entry name" value="Glutamine synthetase/guanido kinase"/>
    <property type="match status" value="1"/>
</dbReference>
<comment type="catalytic activity">
    <reaction evidence="1">
        <text>L-cysteine + L-glutamate + ATP = gamma-L-glutamyl-L-cysteine + ADP + phosphate + H(+)</text>
        <dbReference type="Rhea" id="RHEA:13285"/>
        <dbReference type="ChEBI" id="CHEBI:15378"/>
        <dbReference type="ChEBI" id="CHEBI:29985"/>
        <dbReference type="ChEBI" id="CHEBI:30616"/>
        <dbReference type="ChEBI" id="CHEBI:35235"/>
        <dbReference type="ChEBI" id="CHEBI:43474"/>
        <dbReference type="ChEBI" id="CHEBI:58173"/>
        <dbReference type="ChEBI" id="CHEBI:456216"/>
        <dbReference type="EC" id="6.3.2.2"/>
    </reaction>
</comment>
<comment type="pathway">
    <text evidence="1">Sulfur metabolism; glutathione biosynthesis; glutathione from L-cysteine and L-glutamate: step 1/2.</text>
</comment>
<comment type="similarity">
    <text evidence="1">Belongs to the glutamate--cysteine ligase type 1 family. Type 1 subfamily.</text>
</comment>
<evidence type="ECO:0000255" key="1">
    <source>
        <dbReference type="HAMAP-Rule" id="MF_00578"/>
    </source>
</evidence>
<name>GSH1_ECOBW</name>
<accession>C4ZYT8</accession>
<feature type="chain" id="PRO_1000212103" description="Glutamate--cysteine ligase">
    <location>
        <begin position="1"/>
        <end position="518"/>
    </location>
</feature>
<proteinExistence type="inferred from homology"/>
<sequence>MIPDVSQALAWLEKHPQALKGIQRGLERETLRVNADGTLATTGHPEALGSALTHKWITTDFAEALLEFITPVDGDIEHMLTFMRDLHRYTARNMGDERMWPLSMPCYIAEGQDIELAQYGTSNTGRFKTLYREGLKNRYGALMQTISGVHYNFSLPMAFWQAKCGDISGADAKEKISAGYFRVIRNYYRFGWVIPYLFGASPAICSSFLQGKPTSLPFEKTECGMYYLPYATSLRLSDLGYTNKSQSNLGITFNDLYEYVAGLKQAIKTPSEEYAKIGIEKDGKRLQINSNVLQIENELYAPIRPKRVTRSGESPSDALLRGGIEYIEVRSLDINPFSPIGVDEQQVRFLDLFMVWCALADAPEMSSSELACTRVNWNRVILEGRKPGLTLGIGCETAQFPLPQVGKDLFRDLKRVAQTLDSINGGEAYQKVCDELVACFDNPDLTFSARILRSMIDTGIGGTGKAFAEAYRNLLREEPLEILREEDFVAEREASERRQQEMEAADTEPFAVWLEKHA</sequence>
<protein>
    <recommendedName>
        <fullName evidence="1">Glutamate--cysteine ligase</fullName>
        <ecNumber evidence="1">6.3.2.2</ecNumber>
    </recommendedName>
    <alternativeName>
        <fullName evidence="1">Gamma-ECS</fullName>
        <shortName evidence="1">GCS</shortName>
    </alternativeName>
    <alternativeName>
        <fullName evidence="1">Gamma-glutamylcysteine synthetase</fullName>
    </alternativeName>
</protein>
<keyword id="KW-0067">ATP-binding</keyword>
<keyword id="KW-0317">Glutathione biosynthesis</keyword>
<keyword id="KW-0436">Ligase</keyword>
<keyword id="KW-0547">Nucleotide-binding</keyword>
<reference key="1">
    <citation type="journal article" date="2009" name="J. Bacteriol.">
        <title>Genomic sequencing reveals regulatory mutations and recombinational events in the widely used MC4100 lineage of Escherichia coli K-12.</title>
        <authorList>
            <person name="Ferenci T."/>
            <person name="Zhou Z."/>
            <person name="Betteridge T."/>
            <person name="Ren Y."/>
            <person name="Liu Y."/>
            <person name="Feng L."/>
            <person name="Reeves P.R."/>
            <person name="Wang L."/>
        </authorList>
    </citation>
    <scope>NUCLEOTIDE SEQUENCE [LARGE SCALE GENOMIC DNA]</scope>
    <source>
        <strain>K12 / MC4100 / BW2952</strain>
    </source>
</reference>
<organism>
    <name type="scientific">Escherichia coli (strain K12 / MC4100 / BW2952)</name>
    <dbReference type="NCBI Taxonomy" id="595496"/>
    <lineage>
        <taxon>Bacteria</taxon>
        <taxon>Pseudomonadati</taxon>
        <taxon>Pseudomonadota</taxon>
        <taxon>Gammaproteobacteria</taxon>
        <taxon>Enterobacterales</taxon>
        <taxon>Enterobacteriaceae</taxon>
        <taxon>Escherichia</taxon>
    </lineage>
</organism>